<dbReference type="EMBL" id="CP001048">
    <property type="protein sequence ID" value="ACC87496.1"/>
    <property type="molecule type" value="Genomic_DNA"/>
</dbReference>
<dbReference type="RefSeq" id="WP_002223151.1">
    <property type="nucleotide sequence ID" value="NZ_CP009780.1"/>
</dbReference>
<dbReference type="SMR" id="B2K2Q5"/>
<dbReference type="GeneID" id="49787518"/>
<dbReference type="KEGG" id="ypb:YPTS_0510"/>
<dbReference type="PATRIC" id="fig|502801.10.peg.4184"/>
<dbReference type="GO" id="GO:0005829">
    <property type="term" value="C:cytosol"/>
    <property type="evidence" value="ECO:0007669"/>
    <property type="project" value="TreeGrafter"/>
</dbReference>
<dbReference type="GO" id="GO:0005525">
    <property type="term" value="F:GTP binding"/>
    <property type="evidence" value="ECO:0007669"/>
    <property type="project" value="UniProtKB-KW"/>
</dbReference>
<dbReference type="GO" id="GO:0003924">
    <property type="term" value="F:GTPase activity"/>
    <property type="evidence" value="ECO:0007669"/>
    <property type="project" value="UniProtKB-UniRule"/>
</dbReference>
<dbReference type="GO" id="GO:0097216">
    <property type="term" value="F:guanosine tetraphosphate binding"/>
    <property type="evidence" value="ECO:0007669"/>
    <property type="project" value="UniProtKB-ARBA"/>
</dbReference>
<dbReference type="GO" id="GO:0003743">
    <property type="term" value="F:translation initiation factor activity"/>
    <property type="evidence" value="ECO:0007669"/>
    <property type="project" value="UniProtKB-UniRule"/>
</dbReference>
<dbReference type="CDD" id="cd01887">
    <property type="entry name" value="IF2_eIF5B"/>
    <property type="match status" value="1"/>
</dbReference>
<dbReference type="CDD" id="cd03702">
    <property type="entry name" value="IF2_mtIF2_II"/>
    <property type="match status" value="1"/>
</dbReference>
<dbReference type="CDD" id="cd03692">
    <property type="entry name" value="mtIF2_IVc"/>
    <property type="match status" value="1"/>
</dbReference>
<dbReference type="FunFam" id="2.40.30.10:FF:000007">
    <property type="entry name" value="Translation initiation factor IF-2"/>
    <property type="match status" value="1"/>
</dbReference>
<dbReference type="FunFam" id="2.40.30.10:FF:000008">
    <property type="entry name" value="Translation initiation factor IF-2"/>
    <property type="match status" value="1"/>
</dbReference>
<dbReference type="FunFam" id="3.30.56.50:FF:000001">
    <property type="entry name" value="Translation initiation factor IF-2"/>
    <property type="match status" value="1"/>
</dbReference>
<dbReference type="FunFam" id="3.40.50.10050:FF:000001">
    <property type="entry name" value="Translation initiation factor IF-2"/>
    <property type="match status" value="1"/>
</dbReference>
<dbReference type="FunFam" id="3.40.50.300:FF:000019">
    <property type="entry name" value="Translation initiation factor IF-2"/>
    <property type="match status" value="1"/>
</dbReference>
<dbReference type="Gene3D" id="3.40.50.300">
    <property type="entry name" value="P-loop containing nucleotide triphosphate hydrolases"/>
    <property type="match status" value="1"/>
</dbReference>
<dbReference type="Gene3D" id="3.30.56.50">
    <property type="entry name" value="Putative DNA-binding domain, N-terminal subdomain of bacterial translation initiation factor IF2"/>
    <property type="match status" value="1"/>
</dbReference>
<dbReference type="Gene3D" id="2.40.30.10">
    <property type="entry name" value="Translation factors"/>
    <property type="match status" value="2"/>
</dbReference>
<dbReference type="Gene3D" id="3.40.50.10050">
    <property type="entry name" value="Translation initiation factor IF- 2, domain 3"/>
    <property type="match status" value="1"/>
</dbReference>
<dbReference type="HAMAP" id="MF_00100_B">
    <property type="entry name" value="IF_2_B"/>
    <property type="match status" value="1"/>
</dbReference>
<dbReference type="InterPro" id="IPR009061">
    <property type="entry name" value="DNA-bd_dom_put_sf"/>
</dbReference>
<dbReference type="InterPro" id="IPR053905">
    <property type="entry name" value="EF-G-like_DII"/>
</dbReference>
<dbReference type="InterPro" id="IPR004161">
    <property type="entry name" value="EFTu-like_2"/>
</dbReference>
<dbReference type="InterPro" id="IPR013575">
    <property type="entry name" value="IF2_assoc_dom_bac"/>
</dbReference>
<dbReference type="InterPro" id="IPR044145">
    <property type="entry name" value="IF2_II"/>
</dbReference>
<dbReference type="InterPro" id="IPR006847">
    <property type="entry name" value="IF2_N"/>
</dbReference>
<dbReference type="InterPro" id="IPR027417">
    <property type="entry name" value="P-loop_NTPase"/>
</dbReference>
<dbReference type="InterPro" id="IPR005225">
    <property type="entry name" value="Small_GTP-bd"/>
</dbReference>
<dbReference type="InterPro" id="IPR000795">
    <property type="entry name" value="T_Tr_GTP-bd_dom"/>
</dbReference>
<dbReference type="InterPro" id="IPR000178">
    <property type="entry name" value="TF_IF2_bacterial-like"/>
</dbReference>
<dbReference type="InterPro" id="IPR015760">
    <property type="entry name" value="TIF_IF2"/>
</dbReference>
<dbReference type="InterPro" id="IPR023115">
    <property type="entry name" value="TIF_IF2_dom3"/>
</dbReference>
<dbReference type="InterPro" id="IPR036925">
    <property type="entry name" value="TIF_IF2_dom3_sf"/>
</dbReference>
<dbReference type="InterPro" id="IPR009000">
    <property type="entry name" value="Transl_B-barrel_sf"/>
</dbReference>
<dbReference type="NCBIfam" id="TIGR00487">
    <property type="entry name" value="IF-2"/>
    <property type="match status" value="1"/>
</dbReference>
<dbReference type="NCBIfam" id="TIGR00231">
    <property type="entry name" value="small_GTP"/>
    <property type="match status" value="1"/>
</dbReference>
<dbReference type="PANTHER" id="PTHR43381:SF5">
    <property type="entry name" value="TR-TYPE G DOMAIN-CONTAINING PROTEIN"/>
    <property type="match status" value="1"/>
</dbReference>
<dbReference type="PANTHER" id="PTHR43381">
    <property type="entry name" value="TRANSLATION INITIATION FACTOR IF-2-RELATED"/>
    <property type="match status" value="1"/>
</dbReference>
<dbReference type="Pfam" id="PF22042">
    <property type="entry name" value="EF-G_D2"/>
    <property type="match status" value="1"/>
</dbReference>
<dbReference type="Pfam" id="PF00009">
    <property type="entry name" value="GTP_EFTU"/>
    <property type="match status" value="1"/>
</dbReference>
<dbReference type="Pfam" id="PF03144">
    <property type="entry name" value="GTP_EFTU_D2"/>
    <property type="match status" value="1"/>
</dbReference>
<dbReference type="Pfam" id="PF11987">
    <property type="entry name" value="IF-2"/>
    <property type="match status" value="1"/>
</dbReference>
<dbReference type="Pfam" id="PF08364">
    <property type="entry name" value="IF2_assoc"/>
    <property type="match status" value="1"/>
</dbReference>
<dbReference type="Pfam" id="PF04760">
    <property type="entry name" value="IF2_N"/>
    <property type="match status" value="2"/>
</dbReference>
<dbReference type="SUPFAM" id="SSF52156">
    <property type="entry name" value="Initiation factor IF2/eIF5b, domain 3"/>
    <property type="match status" value="1"/>
</dbReference>
<dbReference type="SUPFAM" id="SSF52540">
    <property type="entry name" value="P-loop containing nucleoside triphosphate hydrolases"/>
    <property type="match status" value="1"/>
</dbReference>
<dbReference type="SUPFAM" id="SSF46955">
    <property type="entry name" value="Putative DNA-binding domain"/>
    <property type="match status" value="1"/>
</dbReference>
<dbReference type="SUPFAM" id="SSF50447">
    <property type="entry name" value="Translation proteins"/>
    <property type="match status" value="2"/>
</dbReference>
<dbReference type="PROSITE" id="PS51722">
    <property type="entry name" value="G_TR_2"/>
    <property type="match status" value="1"/>
</dbReference>
<dbReference type="PROSITE" id="PS01176">
    <property type="entry name" value="IF2"/>
    <property type="match status" value="1"/>
</dbReference>
<gene>
    <name evidence="2" type="primary">infB</name>
    <name type="ordered locus">YPTS_0510</name>
</gene>
<accession>B2K2Q5</accession>
<feature type="chain" id="PRO_1000093847" description="Translation initiation factor IF-2">
    <location>
        <begin position="1"/>
        <end position="892"/>
    </location>
</feature>
<feature type="domain" description="tr-type G">
    <location>
        <begin position="391"/>
        <end position="560"/>
    </location>
</feature>
<feature type="region of interest" description="Disordered" evidence="3">
    <location>
        <begin position="65"/>
        <end position="296"/>
    </location>
</feature>
<feature type="region of interest" description="G1" evidence="1">
    <location>
        <begin position="400"/>
        <end position="407"/>
    </location>
</feature>
<feature type="region of interest" description="G2" evidence="1">
    <location>
        <begin position="425"/>
        <end position="429"/>
    </location>
</feature>
<feature type="region of interest" description="G3" evidence="1">
    <location>
        <begin position="446"/>
        <end position="449"/>
    </location>
</feature>
<feature type="region of interest" description="G4" evidence="1">
    <location>
        <begin position="500"/>
        <end position="503"/>
    </location>
</feature>
<feature type="region of interest" description="G5" evidence="1">
    <location>
        <begin position="536"/>
        <end position="538"/>
    </location>
</feature>
<feature type="compositionally biased region" description="Polar residues" evidence="3">
    <location>
        <begin position="68"/>
        <end position="82"/>
    </location>
</feature>
<feature type="compositionally biased region" description="Basic and acidic residues" evidence="3">
    <location>
        <begin position="99"/>
        <end position="217"/>
    </location>
</feature>
<feature type="compositionally biased region" description="Polar residues" evidence="3">
    <location>
        <begin position="224"/>
        <end position="237"/>
    </location>
</feature>
<feature type="compositionally biased region" description="Basic and acidic residues" evidence="3">
    <location>
        <begin position="239"/>
        <end position="254"/>
    </location>
</feature>
<feature type="compositionally biased region" description="Basic residues" evidence="3">
    <location>
        <begin position="255"/>
        <end position="269"/>
    </location>
</feature>
<feature type="compositionally biased region" description="Basic and acidic residues" evidence="3">
    <location>
        <begin position="270"/>
        <end position="283"/>
    </location>
</feature>
<feature type="binding site" evidence="2">
    <location>
        <begin position="400"/>
        <end position="407"/>
    </location>
    <ligand>
        <name>GTP</name>
        <dbReference type="ChEBI" id="CHEBI:37565"/>
    </ligand>
</feature>
<feature type="binding site" evidence="2">
    <location>
        <begin position="446"/>
        <end position="450"/>
    </location>
    <ligand>
        <name>GTP</name>
        <dbReference type="ChEBI" id="CHEBI:37565"/>
    </ligand>
</feature>
<feature type="binding site" evidence="2">
    <location>
        <begin position="500"/>
        <end position="503"/>
    </location>
    <ligand>
        <name>GTP</name>
        <dbReference type="ChEBI" id="CHEBI:37565"/>
    </ligand>
</feature>
<proteinExistence type="inferred from homology"/>
<reference key="1">
    <citation type="submission" date="2008-04" db="EMBL/GenBank/DDBJ databases">
        <title>Complete sequence of Yersinia pseudotuberculosis PB1/+.</title>
        <authorList>
            <person name="Copeland A."/>
            <person name="Lucas S."/>
            <person name="Lapidus A."/>
            <person name="Glavina del Rio T."/>
            <person name="Dalin E."/>
            <person name="Tice H."/>
            <person name="Bruce D."/>
            <person name="Goodwin L."/>
            <person name="Pitluck S."/>
            <person name="Munk A.C."/>
            <person name="Brettin T."/>
            <person name="Detter J.C."/>
            <person name="Han C."/>
            <person name="Tapia R."/>
            <person name="Schmutz J."/>
            <person name="Larimer F."/>
            <person name="Land M."/>
            <person name="Hauser L."/>
            <person name="Challacombe J.F."/>
            <person name="Green L."/>
            <person name="Lindler L.E."/>
            <person name="Nikolich M.P."/>
            <person name="Richardson P."/>
        </authorList>
    </citation>
    <scope>NUCLEOTIDE SEQUENCE [LARGE SCALE GENOMIC DNA]</scope>
    <source>
        <strain>PB1/+</strain>
    </source>
</reference>
<sequence>MTDVTVKSLAAEIQTPVDRLVQQFADAGIKKSDVDSVTQQEKEILLAHLNREHGSVPNKLTLQRKTRSTLNIPSTGGKSKSVQIEVRKKRTYVNTPEAEQAKAEEQAQREAEEQAQREAEATAQKIAEEKAKREAEEQAKREAAEKAKRQAAEKEKVTNQQTDEKTKPAQTDKARREAEAAELKRSVEEETRRKVEEDAKRVAEEARKMAAENEGKWPEPVAEQTESADYHVTTSQHARAAEDENDAKVEGDRRSRTRGGKATKQKKGNKLSESKADREEARAVGRKGKRKPSTLQQSFNKPVVAVNRDVVIGETVTVAELANKMAVKGSQVIKAMMKLGAMATINQVIDQETAQLVAEEMGHKVILRRENELEEALMSDRDIGVEAAAEHRAPVVTIMGHVDHGKTSLLDYIRSTKVASGEAGGITQHIGAYHVETENGMITFLDTPGHAAFTSMRARGAQATDIVVLVVAADDGVMPQTIEAIQHAKAANVPVVVAVNKIDKPEADPDRVKTELSQYGIQPEEWGGESQFINVSAKAGIGIDELLNAILLQAEVLELKAVRTGMANGVVIESFLDKGRGPVATVLVQQGTLNKGDIVLCGFEYGRVRAMRDELGRDITSAGPSIPVEILGLSSVPAAGDEVTVVRDEKKAREVALYRQGKFREVKLARQQKSKLENMFANMTEGEVSELNIVIKSDVQGSCEAICDSLEKLSTDEVKVRIVGSGVGGITETDATLAAASGAIILGFNVRADASARRVVETEGLDLRYYSVIYSLIDEVKQAMSGMLAPEYKQQIIGLAEVRDVFKSPKFGAIAGCMVTEGVIKRNNPIRVLRDNVVIYEGELESLRRFKDDVSEVRNGMECGIGVKNYNDVRTGDVIEVFEIIEIKRTIA</sequence>
<comment type="function">
    <text evidence="2">One of the essential components for the initiation of protein synthesis. Protects formylmethionyl-tRNA from spontaneous hydrolysis and promotes its binding to the 30S ribosomal subunits. Also involved in the hydrolysis of GTP during the formation of the 70S ribosomal complex.</text>
</comment>
<comment type="subcellular location">
    <subcellularLocation>
        <location evidence="2">Cytoplasm</location>
    </subcellularLocation>
</comment>
<comment type="similarity">
    <text evidence="2">Belongs to the TRAFAC class translation factor GTPase superfamily. Classic translation factor GTPase family. IF-2 subfamily.</text>
</comment>
<evidence type="ECO:0000250" key="1"/>
<evidence type="ECO:0000255" key="2">
    <source>
        <dbReference type="HAMAP-Rule" id="MF_00100"/>
    </source>
</evidence>
<evidence type="ECO:0000256" key="3">
    <source>
        <dbReference type="SAM" id="MobiDB-lite"/>
    </source>
</evidence>
<protein>
    <recommendedName>
        <fullName evidence="2">Translation initiation factor IF-2</fullName>
    </recommendedName>
</protein>
<name>IF2_YERPB</name>
<organism>
    <name type="scientific">Yersinia pseudotuberculosis serotype IB (strain PB1/+)</name>
    <dbReference type="NCBI Taxonomy" id="502801"/>
    <lineage>
        <taxon>Bacteria</taxon>
        <taxon>Pseudomonadati</taxon>
        <taxon>Pseudomonadota</taxon>
        <taxon>Gammaproteobacteria</taxon>
        <taxon>Enterobacterales</taxon>
        <taxon>Yersiniaceae</taxon>
        <taxon>Yersinia</taxon>
    </lineage>
</organism>
<keyword id="KW-0963">Cytoplasm</keyword>
<keyword id="KW-0342">GTP-binding</keyword>
<keyword id="KW-0396">Initiation factor</keyword>
<keyword id="KW-0547">Nucleotide-binding</keyword>
<keyword id="KW-0648">Protein biosynthesis</keyword>